<organism>
    <name type="scientific">Anguilla japonica</name>
    <name type="common">Japanese eel</name>
    <dbReference type="NCBI Taxonomy" id="7937"/>
    <lineage>
        <taxon>Eukaryota</taxon>
        <taxon>Metazoa</taxon>
        <taxon>Chordata</taxon>
        <taxon>Craniata</taxon>
        <taxon>Vertebrata</taxon>
        <taxon>Euteleostomi</taxon>
        <taxon>Actinopterygii</taxon>
        <taxon>Neopterygii</taxon>
        <taxon>Teleostei</taxon>
        <taxon>Anguilliformes</taxon>
        <taxon>Anguillidae</taxon>
        <taxon>Anguilla</taxon>
    </lineage>
</organism>
<proteinExistence type="evidence at protein level"/>
<feature type="signal peptide" evidence="3">
    <location>
        <begin position="1"/>
        <end position="24"/>
    </location>
</feature>
<feature type="chain" id="PRO_0000017565" description="Lactose-binding lectin l-2" evidence="3">
    <location>
        <begin position="25"/>
        <end position="166"/>
    </location>
</feature>
<feature type="domain" description="C-type lectin" evidence="2">
    <location>
        <begin position="41"/>
        <end position="161"/>
    </location>
</feature>
<feature type="disulfide bond" evidence="1 2">
    <location>
        <begin position="34"/>
        <end position="45"/>
    </location>
</feature>
<feature type="disulfide bond" evidence="1 2">
    <location>
        <begin position="62"/>
        <end position="160"/>
    </location>
</feature>
<feature type="disulfide bond" evidence="1 2">
    <location>
        <begin position="136"/>
        <end position="152"/>
    </location>
</feature>
<evidence type="ECO:0000250" key="1">
    <source>
        <dbReference type="UniProtKB" id="Q9NNX6"/>
    </source>
</evidence>
<evidence type="ECO:0000255" key="2">
    <source>
        <dbReference type="PROSITE-ProRule" id="PRU00040"/>
    </source>
</evidence>
<evidence type="ECO:0000269" key="3">
    <source>
    </source>
</evidence>
<evidence type="ECO:0000303" key="4">
    <source>
    </source>
</evidence>
<evidence type="ECO:0000305" key="5"/>
<evidence type="ECO:0000312" key="6">
    <source>
        <dbReference type="EMBL" id="BAB47156.2"/>
    </source>
</evidence>
<dbReference type="EMBL" id="AB050703">
    <property type="protein sequence ID" value="BAB47156.2"/>
    <property type="molecule type" value="mRNA"/>
</dbReference>
<dbReference type="SMR" id="Q90WJ8"/>
<dbReference type="GO" id="GO:0005576">
    <property type="term" value="C:extracellular region"/>
    <property type="evidence" value="ECO:0000314"/>
    <property type="project" value="UniProtKB"/>
</dbReference>
<dbReference type="GO" id="GO:0030246">
    <property type="term" value="F:carbohydrate binding"/>
    <property type="evidence" value="ECO:0000314"/>
    <property type="project" value="UniProtKB"/>
</dbReference>
<dbReference type="GO" id="GO:0050829">
    <property type="term" value="P:defense response to Gram-negative bacterium"/>
    <property type="evidence" value="ECO:0000314"/>
    <property type="project" value="UniProtKB"/>
</dbReference>
<dbReference type="GO" id="GO:0043152">
    <property type="term" value="P:induction of bacterial agglutination"/>
    <property type="evidence" value="ECO:0000314"/>
    <property type="project" value="UniProtKB"/>
</dbReference>
<dbReference type="CDD" id="cd00037">
    <property type="entry name" value="CLECT"/>
    <property type="match status" value="1"/>
</dbReference>
<dbReference type="Gene3D" id="3.10.100.10">
    <property type="entry name" value="Mannose-Binding Protein A, subunit A"/>
    <property type="match status" value="1"/>
</dbReference>
<dbReference type="InterPro" id="IPR001304">
    <property type="entry name" value="C-type_lectin-like"/>
</dbReference>
<dbReference type="InterPro" id="IPR016186">
    <property type="entry name" value="C-type_lectin-like/link_sf"/>
</dbReference>
<dbReference type="InterPro" id="IPR050111">
    <property type="entry name" value="C-type_lectin/snaclec_domain"/>
</dbReference>
<dbReference type="InterPro" id="IPR018378">
    <property type="entry name" value="C-type_lectin_CS"/>
</dbReference>
<dbReference type="InterPro" id="IPR016187">
    <property type="entry name" value="CTDL_fold"/>
</dbReference>
<dbReference type="PANTHER" id="PTHR22803">
    <property type="entry name" value="MANNOSE, PHOSPHOLIPASE, LECTIN RECEPTOR RELATED"/>
    <property type="match status" value="1"/>
</dbReference>
<dbReference type="Pfam" id="PF00059">
    <property type="entry name" value="Lectin_C"/>
    <property type="match status" value="1"/>
</dbReference>
<dbReference type="SMART" id="SM00034">
    <property type="entry name" value="CLECT"/>
    <property type="match status" value="1"/>
</dbReference>
<dbReference type="SUPFAM" id="SSF56436">
    <property type="entry name" value="C-type lectin-like"/>
    <property type="match status" value="1"/>
</dbReference>
<dbReference type="PROSITE" id="PS00615">
    <property type="entry name" value="C_TYPE_LECTIN_1"/>
    <property type="match status" value="1"/>
</dbReference>
<dbReference type="PROSITE" id="PS50041">
    <property type="entry name" value="C_TYPE_LECTIN_2"/>
    <property type="match status" value="1"/>
</dbReference>
<gene>
    <name evidence="4" type="primary">l-2</name>
</gene>
<comment type="function">
    <text evidence="3">Involved in host defense at the body surface. Causes agglutination and suppresses the growth of the Gram-negative bacterium E.coli K12. Possesses calcium-independent hemagglutinating activity.</text>
</comment>
<comment type="subunit">
    <text evidence="3">Homodimer; disulfide-linked.</text>
</comment>
<comment type="subcellular location">
    <subcellularLocation>
        <location evidence="3">Secreted</location>
    </subcellularLocation>
</comment>
<comment type="tissue specificity">
    <text evidence="3">Skin; contained within club cells which are a component of the epidermis in combination with epithelial cells and mucus cells (at protein level).</text>
</comment>
<comment type="mass spectrometry"/>
<comment type="miscellaneous">
    <text evidence="3">Binds lactose inhibiting its agglutination activity.</text>
</comment>
<reference evidence="5 6" key="1">
    <citation type="journal article" date="2002" name="J. Biol. Chem.">
        <title>Primary structure and characteristics of a lectin from skin mucus of the Japanese eel Anguilla japonica.</title>
        <authorList>
            <person name="Tasumi S."/>
            <person name="Ohira T."/>
            <person name="Kawazoe I."/>
            <person name="Suetake H."/>
            <person name="Suzuki Y."/>
            <person name="Aida K."/>
        </authorList>
    </citation>
    <scope>NUCLEOTIDE SEQUENCE [MRNA]</scope>
    <scope>PROTEIN SEQUENCE OF 25-64</scope>
    <scope>FUNCTION</scope>
    <scope>SUBUNIT</scope>
    <scope>SUBCELLULAR LOCATION</scope>
    <scope>TISSUE SPECIFICITY</scope>
    <scope>MASS SPECTROMETRY</scope>
    <source>
        <tissue evidence="3">Skin mucus</tissue>
    </source>
</reference>
<keyword id="KW-0044">Antibiotic</keyword>
<keyword id="KW-0929">Antimicrobial</keyword>
<keyword id="KW-0903">Direct protein sequencing</keyword>
<keyword id="KW-1015">Disulfide bond</keyword>
<keyword id="KW-0348">Hemagglutinin</keyword>
<keyword id="KW-0430">Lectin</keyword>
<keyword id="KW-0964">Secreted</keyword>
<keyword id="KW-0732">Signal</keyword>
<accession>Q90WJ8</accession>
<protein>
    <recommendedName>
        <fullName>Lactose-binding lectin l-2</fullName>
    </recommendedName>
    <alternativeName>
        <fullName>Ajl-2</fullName>
    </alternativeName>
</protein>
<sequence>MVSFKLPAFLCVAVLSSMALVSHGAVLGLCEGACPEGWVEHKNRCYLHVAEKKTWLDAELNCLHHGGNLASEHSEDEHQFLKDLHKGSDDPFWIGLSAVHEGRSWLWSDGTSASAEGDFSMWNPGEPNDAGGKEDCVHDNYGGQKHWNDIKCDLLFPSICVLRMVE</sequence>
<name>AJL2_ANGJA</name>